<reference key="1">
    <citation type="journal article" date="2009" name="Science">
        <title>The dynamics and time scale of ongoing genomic erosion in symbiotic bacteria.</title>
        <authorList>
            <person name="Moran N.A."/>
            <person name="McLaughlin H.J."/>
            <person name="Sorek R."/>
        </authorList>
    </citation>
    <scope>NUCLEOTIDE SEQUENCE [LARGE SCALE GENOMIC DNA]</scope>
    <source>
        <strain>Tuc7</strain>
    </source>
</reference>
<comment type="catalytic activity">
    <reaction evidence="1">
        <text>L-cysteine + L-glutamate + ATP = gamma-L-glutamyl-L-cysteine + ADP + phosphate + H(+)</text>
        <dbReference type="Rhea" id="RHEA:13285"/>
        <dbReference type="ChEBI" id="CHEBI:15378"/>
        <dbReference type="ChEBI" id="CHEBI:29985"/>
        <dbReference type="ChEBI" id="CHEBI:30616"/>
        <dbReference type="ChEBI" id="CHEBI:35235"/>
        <dbReference type="ChEBI" id="CHEBI:43474"/>
        <dbReference type="ChEBI" id="CHEBI:58173"/>
        <dbReference type="ChEBI" id="CHEBI:456216"/>
        <dbReference type="EC" id="6.3.2.2"/>
    </reaction>
</comment>
<comment type="pathway">
    <text evidence="1">Sulfur metabolism; glutathione biosynthesis; glutathione from L-cysteine and L-glutamate: step 1/2.</text>
</comment>
<comment type="similarity">
    <text evidence="1">Belongs to the glutamate--cysteine ligase type 1 family. Type 1 subfamily.</text>
</comment>
<evidence type="ECO:0000255" key="1">
    <source>
        <dbReference type="HAMAP-Rule" id="MF_00578"/>
    </source>
</evidence>
<proteinExistence type="inferred from homology"/>
<accession>B8D7U0</accession>
<organism>
    <name type="scientific">Buchnera aphidicola subsp. Acyrthosiphon pisum (strain Tuc7)</name>
    <dbReference type="NCBI Taxonomy" id="561501"/>
    <lineage>
        <taxon>Bacteria</taxon>
        <taxon>Pseudomonadati</taxon>
        <taxon>Pseudomonadota</taxon>
        <taxon>Gammaproteobacteria</taxon>
        <taxon>Enterobacterales</taxon>
        <taxon>Erwiniaceae</taxon>
        <taxon>Buchnera</taxon>
    </lineage>
</organism>
<feature type="chain" id="PRO_1000146875" description="Glutamate--cysteine ligase">
    <location>
        <begin position="1"/>
        <end position="518"/>
    </location>
</feature>
<name>GSH1_BUCAT</name>
<dbReference type="EC" id="6.3.2.2" evidence="1"/>
<dbReference type="EMBL" id="CP001158">
    <property type="protein sequence ID" value="ACL30205.1"/>
    <property type="molecule type" value="Genomic_DNA"/>
</dbReference>
<dbReference type="RefSeq" id="WP_009874363.1">
    <property type="nucleotide sequence ID" value="NC_011834.1"/>
</dbReference>
<dbReference type="SMR" id="B8D7U0"/>
<dbReference type="KEGG" id="bau:BUAPTUC7_401"/>
<dbReference type="HOGENOM" id="CLU_020728_3_0_6"/>
<dbReference type="UniPathway" id="UPA00142">
    <property type="reaction ID" value="UER00209"/>
</dbReference>
<dbReference type="GO" id="GO:0005829">
    <property type="term" value="C:cytosol"/>
    <property type="evidence" value="ECO:0007669"/>
    <property type="project" value="TreeGrafter"/>
</dbReference>
<dbReference type="GO" id="GO:0005524">
    <property type="term" value="F:ATP binding"/>
    <property type="evidence" value="ECO:0007669"/>
    <property type="project" value="UniProtKB-KW"/>
</dbReference>
<dbReference type="GO" id="GO:0004357">
    <property type="term" value="F:glutamate-cysteine ligase activity"/>
    <property type="evidence" value="ECO:0007669"/>
    <property type="project" value="UniProtKB-UniRule"/>
</dbReference>
<dbReference type="GO" id="GO:0046872">
    <property type="term" value="F:metal ion binding"/>
    <property type="evidence" value="ECO:0007669"/>
    <property type="project" value="TreeGrafter"/>
</dbReference>
<dbReference type="GO" id="GO:0006750">
    <property type="term" value="P:glutathione biosynthetic process"/>
    <property type="evidence" value="ECO:0007669"/>
    <property type="project" value="UniProtKB-UniRule"/>
</dbReference>
<dbReference type="Gene3D" id="3.30.590.20">
    <property type="match status" value="1"/>
</dbReference>
<dbReference type="HAMAP" id="MF_00578">
    <property type="entry name" value="Glu_cys_ligase"/>
    <property type="match status" value="1"/>
</dbReference>
<dbReference type="InterPro" id="IPR014746">
    <property type="entry name" value="Gln_synth/guanido_kin_cat_dom"/>
</dbReference>
<dbReference type="InterPro" id="IPR007370">
    <property type="entry name" value="Glu_cys_ligase"/>
</dbReference>
<dbReference type="InterPro" id="IPR006334">
    <property type="entry name" value="Glut_cys_ligase"/>
</dbReference>
<dbReference type="NCBIfam" id="TIGR01434">
    <property type="entry name" value="glu_cys_ligase"/>
    <property type="match status" value="1"/>
</dbReference>
<dbReference type="PANTHER" id="PTHR38761">
    <property type="entry name" value="GLUTAMATE--CYSTEINE LIGASE"/>
    <property type="match status" value="1"/>
</dbReference>
<dbReference type="PANTHER" id="PTHR38761:SF1">
    <property type="entry name" value="GLUTAMATE--CYSTEINE LIGASE"/>
    <property type="match status" value="1"/>
</dbReference>
<dbReference type="Pfam" id="PF04262">
    <property type="entry name" value="Glu_cys_ligase"/>
    <property type="match status" value="1"/>
</dbReference>
<dbReference type="SUPFAM" id="SSF55931">
    <property type="entry name" value="Glutamine synthetase/guanido kinase"/>
    <property type="match status" value="1"/>
</dbReference>
<keyword id="KW-0067">ATP-binding</keyword>
<keyword id="KW-0317">Glutathione biosynthesis</keyword>
<keyword id="KW-0436">Ligase</keyword>
<keyword id="KW-0547">Nucleotide-binding</keyword>
<protein>
    <recommendedName>
        <fullName evidence="1">Glutamate--cysteine ligase</fullName>
        <ecNumber evidence="1">6.3.2.2</ecNumber>
    </recommendedName>
    <alternativeName>
        <fullName evidence="1">Gamma-ECS</fullName>
        <shortName evidence="1">GCS</shortName>
    </alternativeName>
    <alternativeName>
        <fullName evidence="1">Gamma-glutamylcysteine synthetase</fullName>
    </alternativeName>
</protein>
<sequence>MIEDISKKIAWLKKNPKMLKGIFRGIERETLRIQKNGHFSKTIHPYLIGSSLTHKWITTDFSENLLEFITPTSDNIDYLLSFLTDLHSFTASKIKNERMWPFSIPYCFNDQTNIQIAQYGKSNIGKMKTTYRIGLKNRYGDLINTISGIHYNFSLPLFFWTNWENNQNKKNNTDLISSGYLNLIRNYYRFGWIVPYLFGSSPAISSFFLKDTKKKYKFKKNKEDIFYLPWSTSLRLSDIGYSNTNILDLNIMFNDFNEYIESFQNALKTPSKKFINIGLKDEHGNFKQLNTNILQIENELYTQIRPKRKTKDGESLLEALKNRGIEYVEIRSLDVNPFSPIGINKNQILLLDLFLIWCALIDSPKIDKTDFLLTTKNWERIIYEGRKPNQKIYINNNNETKTLIEIGQIIFKDLNEIALILDSNSNNLLYQKACKETQLFLKNPELTYSAQCLNFLMTTGIKKTGLYLANKYHEKFINKNYFNLNQSVLEQEVIRSHQKKIEIEREDILSFEEYIRNK</sequence>
<gene>
    <name evidence="1" type="primary">gshA</name>
    <name type="ordered locus">BUAPTUC7_401</name>
</gene>